<organism>
    <name type="scientific">Homo sapiens</name>
    <name type="common">Human</name>
    <dbReference type="NCBI Taxonomy" id="9606"/>
    <lineage>
        <taxon>Eukaryota</taxon>
        <taxon>Metazoa</taxon>
        <taxon>Chordata</taxon>
        <taxon>Craniata</taxon>
        <taxon>Vertebrata</taxon>
        <taxon>Euteleostomi</taxon>
        <taxon>Mammalia</taxon>
        <taxon>Eutheria</taxon>
        <taxon>Euarchontoglires</taxon>
        <taxon>Primates</taxon>
        <taxon>Haplorrhini</taxon>
        <taxon>Catarrhini</taxon>
        <taxon>Hominidae</taxon>
        <taxon>Homo</taxon>
    </lineage>
</organism>
<accession>P10619</accession>
<accession>B2R798</accession>
<accession>Q561W6</accession>
<accession>Q5JZH1</accession>
<accession>Q96KJ2</accession>
<accession>Q9BR08</accession>
<accession>Q9BW68</accession>
<proteinExistence type="evidence at protein level"/>
<protein>
    <recommendedName>
        <fullName>Lysosomal protective protein</fullName>
        <ecNumber>3.4.16.5</ecNumber>
    </recommendedName>
    <alternativeName>
        <fullName>Carboxypeptidase C</fullName>
    </alternativeName>
    <alternativeName>
        <fullName>Carboxypeptidase L</fullName>
    </alternativeName>
    <alternativeName>
        <fullName>Cathepsin A</fullName>
    </alternativeName>
    <alternativeName>
        <fullName>Protective protein cathepsin A</fullName>
        <shortName>PPCA</shortName>
    </alternativeName>
    <alternativeName>
        <fullName>Protective protein for beta-galactosidase</fullName>
    </alternativeName>
    <component>
        <recommendedName>
            <fullName>Lysosomal protective protein 32 kDa chain</fullName>
        </recommendedName>
    </component>
    <component>
        <recommendedName>
            <fullName>Lysosomal protective protein 20 kDa chain</fullName>
        </recommendedName>
    </component>
</protein>
<sequence length="480" mass="54466">MIRAAPPPLFLLLLLLLLLVSWASRGEAAPDQDEIQRLPGLAKQPSFRQYSGYLKGSGSKHLHYWFVESQKDPENSPVVLWLNGGPGCSSLDGLLTEHGPFLVQPDGVTLEYNPYSWNLIANVLYLESPAGVGFSYSDDKFYATNDTEVAQSNFEALQDFFRLFPEYKNNKLFLTGESYAGIYIPTLAVLVMQDPSMNLQGLAVGNGLSSYEQNDNSLVYFAYYHGLLGNRLWSSLQTHCCSQNKCNFYDNKDLECVTNLQEVARIVGNSGLNIYNLYAPCAGGVPSHFRYEKDTVVVQDLGNIFTRLPLKRMWHQALLRSGDKVRMDPPCTNTTAASTYLNNPYVRKALNIPEQLPQWDMCNFLVNLQYRRLYRSMNSQYLKLLSSQKYQILLYNGDVDMACNFMGDEWFVDSLNQKMEVQRRPWLVKYGDSGEQIAGFVKEFSHIAFLTIKGAGHMVPTDKPLAAFTMFSRFLNKQPY</sequence>
<keyword id="KW-0002">3D-structure</keyword>
<keyword id="KW-0025">Alternative splicing</keyword>
<keyword id="KW-0121">Carboxypeptidase</keyword>
<keyword id="KW-0903">Direct protein sequencing</keyword>
<keyword id="KW-0225">Disease variant</keyword>
<keyword id="KW-1015">Disulfide bond</keyword>
<keyword id="KW-0325">Glycoprotein</keyword>
<keyword id="KW-0378">Hydrolase</keyword>
<keyword id="KW-0458">Lysosome</keyword>
<keyword id="KW-0645">Protease</keyword>
<keyword id="KW-1267">Proteomics identification</keyword>
<keyword id="KW-1185">Reference proteome</keyword>
<keyword id="KW-0732">Signal</keyword>
<keyword id="KW-0865">Zymogen</keyword>
<comment type="function">
    <text evidence="9">Protective protein appears to be essential for both the activity of beta-galactosidase and neuraminidase, it associates with these enzymes and exerts a protective function necessary for their stability and activity. This protein is also a carboxypeptidase and can deamidate tachykinins.</text>
</comment>
<comment type="catalytic activity">
    <reaction evidence="2 3">
        <text>Release of a C-terminal amino acid with broad specificity.</text>
        <dbReference type="EC" id="3.4.16.5"/>
    </reaction>
</comment>
<comment type="subunit">
    <text>Heterodimer of a 32 kDa chain and a 20 kDa chain; disulfide-linked.</text>
</comment>
<comment type="subcellular location">
    <subcellularLocation>
        <location>Lysosome</location>
    </subcellularLocation>
</comment>
<comment type="alternative products">
    <event type="alternative splicing"/>
    <isoform>
        <id>P10619-1</id>
        <name>1</name>
        <sequence type="displayed"/>
    </isoform>
    <isoform>
        <id>P10619-2</id>
        <name>2</name>
        <sequence type="described" ref="VSP_054832"/>
    </isoform>
</comment>
<comment type="disease" evidence="4 8 11 12">
    <disease id="DI-01644">
        <name>Galactosialidosis</name>
        <acronym>GSL</acronym>
        <description>A lysosomal storage disease associated with a combined deficiency of beta-galactosidase and neuraminidase, secondary to a defect in cathepsin A. All patients have clinical manifestations typical of a lysosomal disorder, such as coarse facies, cherry red spots, vertebral changes, foam cells in the bone marrow, and vacuolated lymphocytes. Three phenotypic subtypes are recognized. The early infantile form is associated with fetal hydrops, edema, ascites, visceromegaly, skeletal dysplasia, and early death. The late infantile type is characterized by hepatosplenomegaly, growth retardation, cardiac involvement, and a normal or mildly affected mental state. The juvenile/adult form is characterized by myoclonus, ataxia, angiokeratoma, intellectual disability, neurologic deterioration, absence of visceromegaly, and long survival.</description>
        <dbReference type="MIM" id="256540"/>
    </disease>
    <text>The disease is caused by variants affecting the gene represented in this entry.</text>
</comment>
<comment type="similarity">
    <text evidence="13">Belongs to the peptidase S10 family.</text>
</comment>
<gene>
    <name type="primary">CTSA</name>
    <name type="synonym">PPGB</name>
</gene>
<evidence type="ECO:0000250" key="1"/>
<evidence type="ECO:0000255" key="2">
    <source>
        <dbReference type="PROSITE-ProRule" id="PRU10074"/>
    </source>
</evidence>
<evidence type="ECO:0000255" key="3">
    <source>
        <dbReference type="PROSITE-ProRule" id="PRU10075"/>
    </source>
</evidence>
<evidence type="ECO:0000269" key="4">
    <source>
    </source>
</evidence>
<evidence type="ECO:0000269" key="5">
    <source>
    </source>
</evidence>
<evidence type="ECO:0000269" key="6">
    <source>
    </source>
</evidence>
<evidence type="ECO:0000269" key="7">
    <source>
    </source>
</evidence>
<evidence type="ECO:0000269" key="8">
    <source>
    </source>
</evidence>
<evidence type="ECO:0000269" key="9">
    <source>
    </source>
</evidence>
<evidence type="ECO:0000269" key="10">
    <source>
    </source>
</evidence>
<evidence type="ECO:0000269" key="11">
    <source>
    </source>
</evidence>
<evidence type="ECO:0000269" key="12">
    <source>
    </source>
</evidence>
<evidence type="ECO:0000305" key="13"/>
<evidence type="ECO:0007744" key="14">
    <source>
    </source>
</evidence>
<evidence type="ECO:0007829" key="15">
    <source>
        <dbReference type="PDB" id="1IVY"/>
    </source>
</evidence>
<evidence type="ECO:0007829" key="16">
    <source>
        <dbReference type="PDB" id="4CI9"/>
    </source>
</evidence>
<evidence type="ECO:0007829" key="17">
    <source>
        <dbReference type="PDB" id="4CIA"/>
    </source>
</evidence>
<evidence type="ECO:0007829" key="18">
    <source>
        <dbReference type="PDB" id="6WIA"/>
    </source>
</evidence>
<dbReference type="EC" id="3.4.16.5"/>
<dbReference type="EMBL" id="M22960">
    <property type="protein sequence ID" value="AAA36476.1"/>
    <property type="molecule type" value="mRNA"/>
</dbReference>
<dbReference type="EMBL" id="AK312898">
    <property type="protein sequence ID" value="BAG35745.1"/>
    <property type="molecule type" value="mRNA"/>
</dbReference>
<dbReference type="EMBL" id="AL008726">
    <property type="status" value="NOT_ANNOTATED_CDS"/>
    <property type="molecule type" value="Genomic_DNA"/>
</dbReference>
<dbReference type="EMBL" id="BC000597">
    <property type="protein sequence ID" value="AAH00597.1"/>
    <property type="molecule type" value="mRNA"/>
</dbReference>
<dbReference type="EMBL" id="BC093009">
    <property type="protein sequence ID" value="AAH93009.1"/>
    <property type="molecule type" value="mRNA"/>
</dbReference>
<dbReference type="CCDS" id="CCDS46609.1">
    <molecule id="P10619-1"/>
</dbReference>
<dbReference type="CCDS" id="CCDS54467.1">
    <molecule id="P10619-2"/>
</dbReference>
<dbReference type="PIR" id="A31589">
    <property type="entry name" value="A31589"/>
</dbReference>
<dbReference type="RefSeq" id="NP_000299.3">
    <molecule id="P10619-1"/>
    <property type="nucleotide sequence ID" value="NM_000308.4"/>
</dbReference>
<dbReference type="RefSeq" id="NP_001121167.1">
    <molecule id="P10619-1"/>
    <property type="nucleotide sequence ID" value="NM_001127695.3"/>
</dbReference>
<dbReference type="RefSeq" id="NP_001161066.2">
    <molecule id="P10619-2"/>
    <property type="nucleotide sequence ID" value="NM_001167594.3"/>
</dbReference>
<dbReference type="PDB" id="1IVY">
    <property type="method" value="X-ray"/>
    <property type="resolution" value="2.20 A"/>
    <property type="chains" value="A/B=29-480"/>
</dbReference>
<dbReference type="PDB" id="3BP4">
    <property type="method" value="X-ray"/>
    <property type="resolution" value="1.85 A"/>
    <property type="chains" value="C=2-10"/>
</dbReference>
<dbReference type="PDB" id="3BP7">
    <property type="method" value="X-ray"/>
    <property type="resolution" value="1.80 A"/>
    <property type="chains" value="C=2-10"/>
</dbReference>
<dbReference type="PDB" id="3BXN">
    <property type="method" value="X-ray"/>
    <property type="resolution" value="1.86 A"/>
    <property type="chains" value="C=2-10"/>
</dbReference>
<dbReference type="PDB" id="4AZ0">
    <property type="method" value="X-ray"/>
    <property type="resolution" value="2.17 A"/>
    <property type="chains" value="A=29-326, B=327-480"/>
</dbReference>
<dbReference type="PDB" id="4AZ3">
    <property type="method" value="X-ray"/>
    <property type="resolution" value="2.04 A"/>
    <property type="chains" value="A=29-326, B=327-480"/>
</dbReference>
<dbReference type="PDB" id="4CI9">
    <property type="method" value="X-ray"/>
    <property type="resolution" value="1.58 A"/>
    <property type="chains" value="A=29-480"/>
</dbReference>
<dbReference type="PDB" id="4CIA">
    <property type="method" value="X-ray"/>
    <property type="resolution" value="1.98 A"/>
    <property type="chains" value="A=29-480"/>
</dbReference>
<dbReference type="PDB" id="4CIB">
    <property type="method" value="X-ray"/>
    <property type="resolution" value="1.89 A"/>
    <property type="chains" value="A=29-480"/>
</dbReference>
<dbReference type="PDB" id="4MWS">
    <property type="method" value="X-ray"/>
    <property type="resolution" value="2.80 A"/>
    <property type="chains" value="A/B=29-480"/>
</dbReference>
<dbReference type="PDB" id="4MWT">
    <property type="method" value="X-ray"/>
    <property type="resolution" value="3.85 A"/>
    <property type="chains" value="A/B=29-480"/>
</dbReference>
<dbReference type="PDB" id="6WIA">
    <property type="method" value="X-ray"/>
    <property type="resolution" value="2.21 A"/>
    <property type="chains" value="A=29-480"/>
</dbReference>
<dbReference type="PDBsum" id="1IVY"/>
<dbReference type="PDBsum" id="3BP4"/>
<dbReference type="PDBsum" id="3BP7"/>
<dbReference type="PDBsum" id="3BXN"/>
<dbReference type="PDBsum" id="4AZ0"/>
<dbReference type="PDBsum" id="4AZ3"/>
<dbReference type="PDBsum" id="4CI9"/>
<dbReference type="PDBsum" id="4CIA"/>
<dbReference type="PDBsum" id="4CIB"/>
<dbReference type="PDBsum" id="4MWS"/>
<dbReference type="PDBsum" id="4MWT"/>
<dbReference type="PDBsum" id="6WIA"/>
<dbReference type="SMR" id="P10619"/>
<dbReference type="BioGRID" id="111472">
    <property type="interactions" value="114"/>
</dbReference>
<dbReference type="CORUM" id="P10619"/>
<dbReference type="FunCoup" id="P10619">
    <property type="interactions" value="1025"/>
</dbReference>
<dbReference type="IntAct" id="P10619">
    <property type="interactions" value="33"/>
</dbReference>
<dbReference type="MINT" id="P10619"/>
<dbReference type="STRING" id="9606.ENSP00000361562"/>
<dbReference type="BindingDB" id="P10619"/>
<dbReference type="ChEMBL" id="CHEMBL6115"/>
<dbReference type="DrugBank" id="DB14761">
    <property type="generic name" value="Remdesivir"/>
</dbReference>
<dbReference type="DrugBank" id="DB08934">
    <property type="generic name" value="Sofosbuvir"/>
</dbReference>
<dbReference type="DrugBank" id="DB09299">
    <property type="generic name" value="Tenofovir alafenamide"/>
</dbReference>
<dbReference type="DrugCentral" id="P10619"/>
<dbReference type="GuidetoPHARMACOLOGY" id="1581"/>
<dbReference type="ESTHER" id="human-CTSA">
    <property type="family name" value="Carboxypeptidase_S10"/>
</dbReference>
<dbReference type="MEROPS" id="S10.002"/>
<dbReference type="GlyConnect" id="1477">
    <property type="glycosylation" value="6 N-Linked glycans (2 sites)"/>
</dbReference>
<dbReference type="GlyCosmos" id="P10619">
    <property type="glycosylation" value="2 sites, 6 glycans"/>
</dbReference>
<dbReference type="GlyGen" id="P10619">
    <property type="glycosylation" value="7 sites, 56 N-linked glycans (2 sites), 1 O-linked glycan (1 site)"/>
</dbReference>
<dbReference type="iPTMnet" id="P10619"/>
<dbReference type="PhosphoSitePlus" id="P10619"/>
<dbReference type="SwissPalm" id="P10619"/>
<dbReference type="BioMuta" id="CTSA"/>
<dbReference type="DMDM" id="20178316"/>
<dbReference type="OGP" id="P10619"/>
<dbReference type="jPOST" id="P10619"/>
<dbReference type="MassIVE" id="P10619"/>
<dbReference type="PaxDb" id="9606-ENSP00000361562"/>
<dbReference type="PeptideAtlas" id="P10619"/>
<dbReference type="ProteomicsDB" id="52619">
    <molecule id="P10619-1"/>
</dbReference>
<dbReference type="Pumba" id="P10619"/>
<dbReference type="TopDownProteomics" id="P10619-1">
    <molecule id="P10619-1"/>
</dbReference>
<dbReference type="TopDownProteomics" id="P10619-2">
    <molecule id="P10619-2"/>
</dbReference>
<dbReference type="Antibodypedia" id="27832">
    <property type="antibodies" value="475 antibodies from 36 providers"/>
</dbReference>
<dbReference type="DNASU" id="5476"/>
<dbReference type="Ensembl" id="ENST00000191018.9">
    <molecule id="P10619-1"/>
    <property type="protein sequence ID" value="ENSP00000191018.5"/>
    <property type="gene ID" value="ENSG00000064601.21"/>
</dbReference>
<dbReference type="Ensembl" id="ENST00000354880.9">
    <molecule id="P10619-2"/>
    <property type="protein sequence ID" value="ENSP00000346952.5"/>
    <property type="gene ID" value="ENSG00000064601.21"/>
</dbReference>
<dbReference type="Ensembl" id="ENST00000372459.7">
    <molecule id="P10619-1"/>
    <property type="protein sequence ID" value="ENSP00000361537.2"/>
    <property type="gene ID" value="ENSG00000064601.21"/>
</dbReference>
<dbReference type="Ensembl" id="ENST00000607482.6">
    <molecule id="P10619-1"/>
    <property type="protein sequence ID" value="ENSP00000475524.2"/>
    <property type="gene ID" value="ENSG00000064601.21"/>
</dbReference>
<dbReference type="Ensembl" id="ENST00000646241.3">
    <molecule id="P10619-1"/>
    <property type="protein sequence ID" value="ENSP00000493613.2"/>
    <property type="gene ID" value="ENSG00000064601.21"/>
</dbReference>
<dbReference type="GeneID" id="5476"/>
<dbReference type="KEGG" id="hsa:5476"/>
<dbReference type="MANE-Select" id="ENST00000646241.3">
    <property type="protein sequence ID" value="ENSP00000493613.2"/>
    <property type="RefSeq nucleotide sequence ID" value="NM_000308.4"/>
    <property type="RefSeq protein sequence ID" value="NP_000299.3"/>
</dbReference>
<dbReference type="UCSC" id="uc002xqj.5">
    <molecule id="P10619-1"/>
    <property type="organism name" value="human"/>
</dbReference>
<dbReference type="AGR" id="HGNC:9251"/>
<dbReference type="CTD" id="5476"/>
<dbReference type="DisGeNET" id="5476"/>
<dbReference type="GeneCards" id="CTSA"/>
<dbReference type="HGNC" id="HGNC:9251">
    <property type="gene designation" value="CTSA"/>
</dbReference>
<dbReference type="HPA" id="ENSG00000064601">
    <property type="expression patterns" value="Tissue enhanced (adrenal)"/>
</dbReference>
<dbReference type="MalaCards" id="CTSA"/>
<dbReference type="MIM" id="256540">
    <property type="type" value="phenotype"/>
</dbReference>
<dbReference type="MIM" id="613111">
    <property type="type" value="gene"/>
</dbReference>
<dbReference type="neXtProt" id="NX_P10619"/>
<dbReference type="OpenTargets" id="ENSG00000064601"/>
<dbReference type="Orphanet" id="575553">
    <property type="disease" value="Cathepsin A-related arteriopathy-strokes-leukoencephalopathy"/>
</dbReference>
<dbReference type="Orphanet" id="351">
    <property type="disease" value="Galactosialidosis"/>
</dbReference>
<dbReference type="PharmGKB" id="PA33572"/>
<dbReference type="VEuPathDB" id="HostDB:ENSG00000064601"/>
<dbReference type="eggNOG" id="KOG1282">
    <property type="taxonomic scope" value="Eukaryota"/>
</dbReference>
<dbReference type="GeneTree" id="ENSGT00880000138014"/>
<dbReference type="HOGENOM" id="CLU_008523_13_3_1"/>
<dbReference type="InParanoid" id="P10619"/>
<dbReference type="OMA" id="GDWMKPF"/>
<dbReference type="OrthoDB" id="443318at2759"/>
<dbReference type="PAN-GO" id="P10619">
    <property type="GO annotations" value="1 GO annotation based on evolutionary models"/>
</dbReference>
<dbReference type="PhylomeDB" id="P10619"/>
<dbReference type="TreeFam" id="TF323769"/>
<dbReference type="BRENDA" id="3.4.16.5">
    <property type="organism ID" value="2681"/>
</dbReference>
<dbReference type="PathwayCommons" id="P10619"/>
<dbReference type="Reactome" id="R-HSA-2132295">
    <property type="pathway name" value="MHC class II antigen presentation"/>
</dbReference>
<dbReference type="Reactome" id="R-HSA-4085001">
    <property type="pathway name" value="Sialic acid metabolism"/>
</dbReference>
<dbReference type="Reactome" id="R-HSA-4341670">
    <property type="pathway name" value="Defective NEU1 causes sialidosis"/>
</dbReference>
<dbReference type="Reactome" id="R-HSA-6798695">
    <property type="pathway name" value="Neutrophil degranulation"/>
</dbReference>
<dbReference type="Reactome" id="R-HSA-9840310">
    <property type="pathway name" value="Glycosphingolipid catabolism"/>
</dbReference>
<dbReference type="SABIO-RK" id="P10619"/>
<dbReference type="SignaLink" id="P10619"/>
<dbReference type="SIGNOR" id="P10619"/>
<dbReference type="BioGRID-ORCS" id="5476">
    <property type="hits" value="19 hits in 1157 CRISPR screens"/>
</dbReference>
<dbReference type="ChiTaRS" id="CTSA">
    <property type="organism name" value="human"/>
</dbReference>
<dbReference type="EvolutionaryTrace" id="P10619"/>
<dbReference type="GeneWiki" id="Cathepsin_A"/>
<dbReference type="GenomeRNAi" id="5476"/>
<dbReference type="Pharos" id="P10619">
    <property type="development level" value="Tchem"/>
</dbReference>
<dbReference type="PRO" id="PR:P10619"/>
<dbReference type="Proteomes" id="UP000005640">
    <property type="component" value="Chromosome 20"/>
</dbReference>
<dbReference type="RNAct" id="P10619">
    <property type="molecule type" value="protein"/>
</dbReference>
<dbReference type="Bgee" id="ENSG00000064601">
    <property type="expression patterns" value="Expressed in right adrenal gland and 207 other cell types or tissues"/>
</dbReference>
<dbReference type="ExpressionAtlas" id="P10619">
    <property type="expression patterns" value="baseline and differential"/>
</dbReference>
<dbReference type="GO" id="GO:0035578">
    <property type="term" value="C:azurophil granule lumen"/>
    <property type="evidence" value="ECO:0000304"/>
    <property type="project" value="Reactome"/>
</dbReference>
<dbReference type="GO" id="GO:0005783">
    <property type="term" value="C:endoplasmic reticulum"/>
    <property type="evidence" value="ECO:0000304"/>
    <property type="project" value="ProtInc"/>
</dbReference>
<dbReference type="GO" id="GO:0070062">
    <property type="term" value="C:extracellular exosome"/>
    <property type="evidence" value="ECO:0007005"/>
    <property type="project" value="UniProtKB"/>
</dbReference>
<dbReference type="GO" id="GO:0005576">
    <property type="term" value="C:extracellular region"/>
    <property type="evidence" value="ECO:0000304"/>
    <property type="project" value="Reactome"/>
</dbReference>
<dbReference type="GO" id="GO:0043231">
    <property type="term" value="C:intracellular membrane-bounded organelle"/>
    <property type="evidence" value="ECO:0000314"/>
    <property type="project" value="HPA"/>
</dbReference>
<dbReference type="GO" id="GO:0043202">
    <property type="term" value="C:lysosomal lumen"/>
    <property type="evidence" value="ECO:0000304"/>
    <property type="project" value="Reactome"/>
</dbReference>
<dbReference type="GO" id="GO:0005764">
    <property type="term" value="C:lysosome"/>
    <property type="evidence" value="ECO:0000303"/>
    <property type="project" value="UniProtKB"/>
</dbReference>
<dbReference type="GO" id="GO:0016020">
    <property type="term" value="C:membrane"/>
    <property type="evidence" value="ECO:0007005"/>
    <property type="project" value="UniProtKB"/>
</dbReference>
<dbReference type="GO" id="GO:0004180">
    <property type="term" value="F:carboxypeptidase activity"/>
    <property type="evidence" value="ECO:0000304"/>
    <property type="project" value="ProtInc"/>
</dbReference>
<dbReference type="GO" id="GO:0008047">
    <property type="term" value="F:enzyme activator activity"/>
    <property type="evidence" value="ECO:0000304"/>
    <property type="project" value="ProtInc"/>
</dbReference>
<dbReference type="GO" id="GO:0004185">
    <property type="term" value="F:serine-type carboxypeptidase activity"/>
    <property type="evidence" value="ECO:0000315"/>
    <property type="project" value="UniProtKB"/>
</dbReference>
<dbReference type="GO" id="GO:0006886">
    <property type="term" value="P:intracellular protein transport"/>
    <property type="evidence" value="ECO:0000304"/>
    <property type="project" value="ProtInc"/>
</dbReference>
<dbReference type="GO" id="GO:1904715">
    <property type="term" value="P:negative regulation of chaperone-mediated autophagy"/>
    <property type="evidence" value="ECO:0000316"/>
    <property type="project" value="ParkinsonsUK-UCL"/>
</dbReference>
<dbReference type="GO" id="GO:0006508">
    <property type="term" value="P:proteolysis"/>
    <property type="evidence" value="ECO:0000314"/>
    <property type="project" value="ParkinsonsUK-UCL"/>
</dbReference>
<dbReference type="GO" id="GO:1904714">
    <property type="term" value="P:regulation of chaperone-mediated autophagy"/>
    <property type="evidence" value="ECO:0000304"/>
    <property type="project" value="ParkinsonsUK-UCL"/>
</dbReference>
<dbReference type="GO" id="GO:0031647">
    <property type="term" value="P:regulation of protein stability"/>
    <property type="evidence" value="ECO:0000315"/>
    <property type="project" value="ParkinsonsUK-UCL"/>
</dbReference>
<dbReference type="FunFam" id="3.40.50.1820:FF:000335">
    <property type="entry name" value="Carboxypeptidase"/>
    <property type="match status" value="1"/>
</dbReference>
<dbReference type="Gene3D" id="3.40.50.1820">
    <property type="entry name" value="alpha/beta hydrolase"/>
    <property type="match status" value="1"/>
</dbReference>
<dbReference type="InterPro" id="IPR029058">
    <property type="entry name" value="AB_hydrolase_fold"/>
</dbReference>
<dbReference type="InterPro" id="IPR001563">
    <property type="entry name" value="Peptidase_S10"/>
</dbReference>
<dbReference type="InterPro" id="IPR033124">
    <property type="entry name" value="Ser_caboxypep_his_AS"/>
</dbReference>
<dbReference type="InterPro" id="IPR018202">
    <property type="entry name" value="Ser_caboxypep_ser_AS"/>
</dbReference>
<dbReference type="PANTHER" id="PTHR11802:SF502">
    <property type="entry name" value="LYSOSOMAL PROTECTIVE PROTEIN"/>
    <property type="match status" value="1"/>
</dbReference>
<dbReference type="PANTHER" id="PTHR11802">
    <property type="entry name" value="SERINE PROTEASE FAMILY S10 SERINE CARBOXYPEPTIDASE"/>
    <property type="match status" value="1"/>
</dbReference>
<dbReference type="Pfam" id="PF00450">
    <property type="entry name" value="Peptidase_S10"/>
    <property type="match status" value="1"/>
</dbReference>
<dbReference type="PRINTS" id="PR00724">
    <property type="entry name" value="CRBOXYPTASEC"/>
</dbReference>
<dbReference type="SUPFAM" id="SSF53474">
    <property type="entry name" value="alpha/beta-Hydrolases"/>
    <property type="match status" value="1"/>
</dbReference>
<dbReference type="PROSITE" id="PS00560">
    <property type="entry name" value="CARBOXYPEPT_SER_HIS"/>
    <property type="match status" value="1"/>
</dbReference>
<dbReference type="PROSITE" id="PS00131">
    <property type="entry name" value="CARBOXYPEPT_SER_SER"/>
    <property type="match status" value="1"/>
</dbReference>
<reference key="1">
    <citation type="journal article" date="1988" name="Cell">
        <title>Expression of cDNA encoding the human 'protective protein' associated with lysosomal beta-galactosidase and neuraminidase: homology to yeast proteases.</title>
        <authorList>
            <person name="Galjart N.J."/>
            <person name="Gillemans N."/>
            <person name="Harris A."/>
            <person name="van de Horst G.T.J."/>
            <person name="Verheijen F.W."/>
            <person name="Galjaard H."/>
            <person name="D'Azzo A."/>
        </authorList>
    </citation>
    <scope>NUCLEOTIDE SEQUENCE [MRNA] (ISOFORM 1)</scope>
    <scope>PARTIAL PROTEIN SEQUENCE</scope>
</reference>
<reference key="2">
    <citation type="journal article" date="2004" name="Nat. Genet.">
        <title>Complete sequencing and characterization of 21,243 full-length human cDNAs.</title>
        <authorList>
            <person name="Ota T."/>
            <person name="Suzuki Y."/>
            <person name="Nishikawa T."/>
            <person name="Otsuki T."/>
            <person name="Sugiyama T."/>
            <person name="Irie R."/>
            <person name="Wakamatsu A."/>
            <person name="Hayashi K."/>
            <person name="Sato H."/>
            <person name="Nagai K."/>
            <person name="Kimura K."/>
            <person name="Makita H."/>
            <person name="Sekine M."/>
            <person name="Obayashi M."/>
            <person name="Nishi T."/>
            <person name="Shibahara T."/>
            <person name="Tanaka T."/>
            <person name="Ishii S."/>
            <person name="Yamamoto J."/>
            <person name="Saito K."/>
            <person name="Kawai Y."/>
            <person name="Isono Y."/>
            <person name="Nakamura Y."/>
            <person name="Nagahari K."/>
            <person name="Murakami K."/>
            <person name="Yasuda T."/>
            <person name="Iwayanagi T."/>
            <person name="Wagatsuma M."/>
            <person name="Shiratori A."/>
            <person name="Sudo H."/>
            <person name="Hosoiri T."/>
            <person name="Kaku Y."/>
            <person name="Kodaira H."/>
            <person name="Kondo H."/>
            <person name="Sugawara M."/>
            <person name="Takahashi M."/>
            <person name="Kanda K."/>
            <person name="Yokoi T."/>
            <person name="Furuya T."/>
            <person name="Kikkawa E."/>
            <person name="Omura Y."/>
            <person name="Abe K."/>
            <person name="Kamihara K."/>
            <person name="Katsuta N."/>
            <person name="Sato K."/>
            <person name="Tanikawa M."/>
            <person name="Yamazaki M."/>
            <person name="Ninomiya K."/>
            <person name="Ishibashi T."/>
            <person name="Yamashita H."/>
            <person name="Murakawa K."/>
            <person name="Fujimori K."/>
            <person name="Tanai H."/>
            <person name="Kimata M."/>
            <person name="Watanabe M."/>
            <person name="Hiraoka S."/>
            <person name="Chiba Y."/>
            <person name="Ishida S."/>
            <person name="Ono Y."/>
            <person name="Takiguchi S."/>
            <person name="Watanabe S."/>
            <person name="Yosida M."/>
            <person name="Hotuta T."/>
            <person name="Kusano J."/>
            <person name="Kanehori K."/>
            <person name="Takahashi-Fujii A."/>
            <person name="Hara H."/>
            <person name="Tanase T.-O."/>
            <person name="Nomura Y."/>
            <person name="Togiya S."/>
            <person name="Komai F."/>
            <person name="Hara R."/>
            <person name="Takeuchi K."/>
            <person name="Arita M."/>
            <person name="Imose N."/>
            <person name="Musashino K."/>
            <person name="Yuuki H."/>
            <person name="Oshima A."/>
            <person name="Sasaki N."/>
            <person name="Aotsuka S."/>
            <person name="Yoshikawa Y."/>
            <person name="Matsunawa H."/>
            <person name="Ichihara T."/>
            <person name="Shiohata N."/>
            <person name="Sano S."/>
            <person name="Moriya S."/>
            <person name="Momiyama H."/>
            <person name="Satoh N."/>
            <person name="Takami S."/>
            <person name="Terashima Y."/>
            <person name="Suzuki O."/>
            <person name="Nakagawa S."/>
            <person name="Senoh A."/>
            <person name="Mizoguchi H."/>
            <person name="Goto Y."/>
            <person name="Shimizu F."/>
            <person name="Wakebe H."/>
            <person name="Hishigaki H."/>
            <person name="Watanabe T."/>
            <person name="Sugiyama A."/>
            <person name="Takemoto M."/>
            <person name="Kawakami B."/>
            <person name="Yamazaki M."/>
            <person name="Watanabe K."/>
            <person name="Kumagai A."/>
            <person name="Itakura S."/>
            <person name="Fukuzumi Y."/>
            <person name="Fujimori Y."/>
            <person name="Komiyama M."/>
            <person name="Tashiro H."/>
            <person name="Tanigami A."/>
            <person name="Fujiwara T."/>
            <person name="Ono T."/>
            <person name="Yamada K."/>
            <person name="Fujii Y."/>
            <person name="Ozaki K."/>
            <person name="Hirao M."/>
            <person name="Ohmori Y."/>
            <person name="Kawabata A."/>
            <person name="Hikiji T."/>
            <person name="Kobatake N."/>
            <person name="Inagaki H."/>
            <person name="Ikema Y."/>
            <person name="Okamoto S."/>
            <person name="Okitani R."/>
            <person name="Kawakami T."/>
            <person name="Noguchi S."/>
            <person name="Itoh T."/>
            <person name="Shigeta K."/>
            <person name="Senba T."/>
            <person name="Matsumura K."/>
            <person name="Nakajima Y."/>
            <person name="Mizuno T."/>
            <person name="Morinaga M."/>
            <person name="Sasaki M."/>
            <person name="Togashi T."/>
            <person name="Oyama M."/>
            <person name="Hata H."/>
            <person name="Watanabe M."/>
            <person name="Komatsu T."/>
            <person name="Mizushima-Sugano J."/>
            <person name="Satoh T."/>
            <person name="Shirai Y."/>
            <person name="Takahashi Y."/>
            <person name="Nakagawa K."/>
            <person name="Okumura K."/>
            <person name="Nagase T."/>
            <person name="Nomura N."/>
            <person name="Kikuchi H."/>
            <person name="Masuho Y."/>
            <person name="Yamashita R."/>
            <person name="Nakai K."/>
            <person name="Yada T."/>
            <person name="Nakamura Y."/>
            <person name="Ohara O."/>
            <person name="Isogai T."/>
            <person name="Sugano S."/>
        </authorList>
    </citation>
    <scope>NUCLEOTIDE SEQUENCE [LARGE SCALE MRNA] (ISOFORM 1)</scope>
    <source>
        <tissue>Brain</tissue>
    </source>
</reference>
<reference key="3">
    <citation type="journal article" date="2001" name="Nature">
        <title>The DNA sequence and comparative analysis of human chromosome 20.</title>
        <authorList>
            <person name="Deloukas P."/>
            <person name="Matthews L.H."/>
            <person name="Ashurst J.L."/>
            <person name="Burton J."/>
            <person name="Gilbert J.G.R."/>
            <person name="Jones M."/>
            <person name="Stavrides G."/>
            <person name="Almeida J.P."/>
            <person name="Babbage A.K."/>
            <person name="Bagguley C.L."/>
            <person name="Bailey J."/>
            <person name="Barlow K.F."/>
            <person name="Bates K.N."/>
            <person name="Beard L.M."/>
            <person name="Beare D.M."/>
            <person name="Beasley O.P."/>
            <person name="Bird C.P."/>
            <person name="Blakey S.E."/>
            <person name="Bridgeman A.M."/>
            <person name="Brown A.J."/>
            <person name="Buck D."/>
            <person name="Burrill W.D."/>
            <person name="Butler A.P."/>
            <person name="Carder C."/>
            <person name="Carter N.P."/>
            <person name="Chapman J.C."/>
            <person name="Clamp M."/>
            <person name="Clark G."/>
            <person name="Clark L.N."/>
            <person name="Clark S.Y."/>
            <person name="Clee C.M."/>
            <person name="Clegg S."/>
            <person name="Cobley V.E."/>
            <person name="Collier R.E."/>
            <person name="Connor R.E."/>
            <person name="Corby N.R."/>
            <person name="Coulson A."/>
            <person name="Coville G.J."/>
            <person name="Deadman R."/>
            <person name="Dhami P.D."/>
            <person name="Dunn M."/>
            <person name="Ellington A.G."/>
            <person name="Frankland J.A."/>
            <person name="Fraser A."/>
            <person name="French L."/>
            <person name="Garner P."/>
            <person name="Grafham D.V."/>
            <person name="Griffiths C."/>
            <person name="Griffiths M.N.D."/>
            <person name="Gwilliam R."/>
            <person name="Hall R.E."/>
            <person name="Hammond S."/>
            <person name="Harley J.L."/>
            <person name="Heath P.D."/>
            <person name="Ho S."/>
            <person name="Holden J.L."/>
            <person name="Howden P.J."/>
            <person name="Huckle E."/>
            <person name="Hunt A.R."/>
            <person name="Hunt S.E."/>
            <person name="Jekosch K."/>
            <person name="Johnson C.M."/>
            <person name="Johnson D."/>
            <person name="Kay M.P."/>
            <person name="Kimberley A.M."/>
            <person name="King A."/>
            <person name="Knights A."/>
            <person name="Laird G.K."/>
            <person name="Lawlor S."/>
            <person name="Lehvaeslaiho M.H."/>
            <person name="Leversha M.A."/>
            <person name="Lloyd C."/>
            <person name="Lloyd D.M."/>
            <person name="Lovell J.D."/>
            <person name="Marsh V.L."/>
            <person name="Martin S.L."/>
            <person name="McConnachie L.J."/>
            <person name="McLay K."/>
            <person name="McMurray A.A."/>
            <person name="Milne S.A."/>
            <person name="Mistry D."/>
            <person name="Moore M.J.F."/>
            <person name="Mullikin J.C."/>
            <person name="Nickerson T."/>
            <person name="Oliver K."/>
            <person name="Parker A."/>
            <person name="Patel R."/>
            <person name="Pearce T.A.V."/>
            <person name="Peck A.I."/>
            <person name="Phillimore B.J.C.T."/>
            <person name="Prathalingam S.R."/>
            <person name="Plumb R.W."/>
            <person name="Ramsay H."/>
            <person name="Rice C.M."/>
            <person name="Ross M.T."/>
            <person name="Scott C.E."/>
            <person name="Sehra H.K."/>
            <person name="Shownkeen R."/>
            <person name="Sims S."/>
            <person name="Skuce C.D."/>
            <person name="Smith M.L."/>
            <person name="Soderlund C."/>
            <person name="Steward C.A."/>
            <person name="Sulston J.E."/>
            <person name="Swann R.M."/>
            <person name="Sycamore N."/>
            <person name="Taylor R."/>
            <person name="Tee L."/>
            <person name="Thomas D.W."/>
            <person name="Thorpe A."/>
            <person name="Tracey A."/>
            <person name="Tromans A.C."/>
            <person name="Vaudin M."/>
            <person name="Wall M."/>
            <person name="Wallis J.M."/>
            <person name="Whitehead S.L."/>
            <person name="Whittaker P."/>
            <person name="Willey D.L."/>
            <person name="Williams L."/>
            <person name="Williams S.A."/>
            <person name="Wilming L."/>
            <person name="Wray P.W."/>
            <person name="Hubbard T."/>
            <person name="Durbin R.M."/>
            <person name="Bentley D.R."/>
            <person name="Beck S."/>
            <person name="Rogers J."/>
        </authorList>
    </citation>
    <scope>NUCLEOTIDE SEQUENCE [LARGE SCALE GENOMIC DNA]</scope>
</reference>
<reference key="4">
    <citation type="journal article" date="2004" name="Genome Res.">
        <title>The status, quality, and expansion of the NIH full-length cDNA project: the Mammalian Gene Collection (MGC).</title>
        <authorList>
            <consortium name="The MGC Project Team"/>
        </authorList>
    </citation>
    <scope>NUCLEOTIDE SEQUENCE [LARGE SCALE MRNA] (ISOFORM 1)</scope>
    <source>
        <tissue>Placenta</tissue>
        <tissue>Skin</tissue>
    </source>
</reference>
<reference key="5">
    <citation type="journal article" date="1990" name="J. Biol. Chem.">
        <title>A peptidase in human platelets that deamidates tachykinins. Probable identity with the lysosomal 'protective protein'.</title>
        <authorList>
            <person name="Jackman H.L."/>
            <person name="Tan F."/>
            <person name="Tamei H."/>
            <person name="Beurling-Harbury C."/>
            <person name="Li X.-Y."/>
            <person name="Skidgel R.A."/>
            <person name="Erdoes E.G."/>
        </authorList>
    </citation>
    <scope>PROTEIN SEQUENCE OF 29-53 AND 327-351</scope>
    <source>
        <tissue>Platelet</tissue>
    </source>
</reference>
<reference key="6">
    <citation type="journal article" date="2003" name="Nat. Biotechnol.">
        <title>Exploring proteomes and analyzing protein processing by mass spectrometric identification of sorted N-terminal peptides.</title>
        <authorList>
            <person name="Gevaert K."/>
            <person name="Goethals M."/>
            <person name="Martens L."/>
            <person name="Van Damme J."/>
            <person name="Staes A."/>
            <person name="Thomas G.R."/>
            <person name="Vandekerckhove J."/>
        </authorList>
    </citation>
    <scope>PROTEIN SEQUENCE OF 29-37</scope>
    <source>
        <tissue>Platelet</tissue>
    </source>
</reference>
<reference key="7">
    <citation type="journal article" date="1991" name="J. Biol. Chem.">
        <title>Human lysosomal protective protein has cathepsin A-like activity distinct from its protective function.</title>
        <authorList>
            <person name="Galjart N.J."/>
            <person name="Morreau H."/>
            <person name="Willemsen R."/>
            <person name="Gillemans N."/>
            <person name="Bonten E.J."/>
            <person name="D'Azzo A."/>
        </authorList>
    </citation>
    <scope>FUNCTION</scope>
    <scope>MUTAGENESIS</scope>
</reference>
<reference key="8">
    <citation type="journal article" date="2006" name="Mol. Cell. Proteomics">
        <title>Elucidation of N-glycosylation sites on human platelet proteins: a glycoproteomic approach.</title>
        <authorList>
            <person name="Lewandrowski U."/>
            <person name="Moebius J."/>
            <person name="Walter U."/>
            <person name="Sickmann A."/>
        </authorList>
    </citation>
    <scope>GLYCOSYLATION [LARGE SCALE ANALYSIS] AT ASN-145</scope>
    <source>
        <tissue>Platelet</tissue>
    </source>
</reference>
<reference key="9">
    <citation type="journal article" date="2009" name="J. Proteome Res.">
        <title>Glycoproteomics analysis of human liver tissue by combination of multiple enzyme digestion and hydrazide chemistry.</title>
        <authorList>
            <person name="Chen R."/>
            <person name="Jiang X."/>
            <person name="Sun D."/>
            <person name="Han G."/>
            <person name="Wang F."/>
            <person name="Ye M."/>
            <person name="Wang L."/>
            <person name="Zou H."/>
        </authorList>
    </citation>
    <scope>GLYCOSYLATION [LARGE SCALE ANALYSIS] AT ASN-145 AND ASN-333</scope>
    <source>
        <tissue>Liver</tissue>
    </source>
</reference>
<reference key="10">
    <citation type="journal article" date="2011" name="BMC Syst. Biol.">
        <title>Initial characterization of the human central proteome.</title>
        <authorList>
            <person name="Burkard T.R."/>
            <person name="Planyavsky M."/>
            <person name="Kaupe I."/>
            <person name="Breitwieser F.P."/>
            <person name="Buerckstuemmer T."/>
            <person name="Bennett K.L."/>
            <person name="Superti-Furga G."/>
            <person name="Colinge J."/>
        </authorList>
    </citation>
    <scope>IDENTIFICATION BY MASS SPECTROMETRY [LARGE SCALE ANALYSIS]</scope>
</reference>
<reference key="11">
    <citation type="journal article" date="2015" name="Proteomics">
        <title>N-terminome analysis of the human mitochondrial proteome.</title>
        <authorList>
            <person name="Vaca Jacome A.S."/>
            <person name="Rabilloud T."/>
            <person name="Schaeffer-Reiss C."/>
            <person name="Rompais M."/>
            <person name="Ayoub D."/>
            <person name="Lane L."/>
            <person name="Bairoch A."/>
            <person name="Van Dorsselaer A."/>
            <person name="Carapito C."/>
        </authorList>
    </citation>
    <scope>CLEAVAGE OF SIGNAL PEPTIDE [LARGE SCALE ANALYSIS] AFTER ALA-28</scope>
    <scope>IDENTIFICATION BY MASS SPECTROMETRY [LARGE SCALE ANALYSIS]</scope>
</reference>
<reference key="12">
    <citation type="journal article" date="1995" name="Structure">
        <title>Three-dimensional structure of the human 'protective protein': structure of the precursor form suggests a complex activation mechanism.</title>
        <authorList>
            <person name="Rudenko G."/>
            <person name="Bonten E."/>
            <person name="D'Azzo A."/>
            <person name="Hol W.G.J."/>
        </authorList>
    </citation>
    <scope>X-RAY CRYSTALLOGRAPHY (2.2 ANGSTROMS)</scope>
</reference>
<reference key="13">
    <citation type="journal article" date="1991" name="EMBO J.">
        <title>A mutation in a mild form of galactosialidosis impairs dimerization of the protective protein and renders it unstable.</title>
        <authorList>
            <person name="Zhou X.Y."/>
            <person name="Galjart N.J."/>
            <person name="Willemsen R."/>
            <person name="Gillemans N."/>
            <person name="Galjaard H."/>
            <person name="D'Azzo A."/>
        </authorList>
    </citation>
    <scope>VARIANT GSL VAL-440</scope>
</reference>
<reference key="14">
    <citation type="journal article" date="1993" name="J. Clin. Invest.">
        <title>Protective protein gene mutations in galactosialidosis.</title>
        <authorList>
            <person name="Shimmoto M."/>
            <person name="Fukuhara Y."/>
            <person name="Itoh K."/>
            <person name="Oshima A."/>
            <person name="Sakuraba H."/>
            <person name="Suzuki Y."/>
        </authorList>
    </citation>
    <scope>VARIANTS GSL ARG-49; ARG-65; LEU-90; ASN-249 AND CYS-395</scope>
</reference>
<reference key="15">
    <citation type="journal article" date="1996" name="Hum. Mol. Genet.">
        <title>Molecular and biochemical analysis of protective protein/cathepsin A mutations: correlation with clinical severity in galactosialidosis.</title>
        <authorList>
            <person name="Zhou X.Y."/>
            <person name="van der Spoel A."/>
            <person name="Rottier R."/>
            <person name="Hale G."/>
            <person name="Willemsen R."/>
            <person name="Berry G.T."/>
            <person name="Strisciuglio P."/>
            <person name="Morrone A."/>
            <person name="Zammarchi E."/>
            <person name="Andria G."/>
            <person name="d'Azzo A."/>
        </authorList>
    </citation>
    <scope>VARIANTS GSL TYR-51; MET-132; PRO-236; ASN-249; THR-406; SER-439 AND VAL-440</scope>
</reference>
<reference key="16">
    <citation type="journal article" date="2000" name="J. Hum. Genet.">
        <title>Structural and functional study of K453E mutant protective protein/cathepsin A causing the late infantile form of galactosialidosis.</title>
        <authorList>
            <person name="Takiguchi K."/>
            <person name="Itoh K."/>
            <person name="Shimmoto M."/>
            <person name="Ozand P.T."/>
            <person name="Doi H."/>
            <person name="Sakuraba H."/>
        </authorList>
    </citation>
    <scope>VARIANT GSL GLU-453</scope>
</reference>
<name>PPGB_HUMAN</name>
<feature type="signal peptide" evidence="5 7 14">
    <location>
        <begin position="1"/>
        <end position="28"/>
    </location>
</feature>
<feature type="chain" id="PRO_0000004274" description="Lysosomal protective protein">
    <location>
        <begin position="29"/>
        <end position="480"/>
    </location>
</feature>
<feature type="chain" id="PRO_0000004275" description="Lysosomal protective protein 32 kDa chain">
    <location>
        <begin position="29"/>
        <end position="326"/>
    </location>
</feature>
<feature type="chain" id="PRO_0000004276" description="Lysosomal protective protein 20 kDa chain">
    <location>
        <begin position="327"/>
        <end position="480"/>
    </location>
</feature>
<feature type="active site">
    <location>
        <position position="178"/>
    </location>
</feature>
<feature type="active site" evidence="1">
    <location>
        <position position="400"/>
    </location>
</feature>
<feature type="active site">
    <location>
        <position position="457"/>
    </location>
</feature>
<feature type="glycosylation site" description="N-linked (GlcNAc...) asparagine" evidence="6 10">
    <location>
        <position position="145"/>
    </location>
</feature>
<feature type="glycosylation site" description="N-linked (GlcNAc...) asparagine" evidence="10">
    <location>
        <position position="333"/>
    </location>
</feature>
<feature type="disulfide bond">
    <location>
        <begin position="88"/>
        <end position="362"/>
    </location>
</feature>
<feature type="disulfide bond">
    <location>
        <begin position="240"/>
        <end position="256"/>
    </location>
</feature>
<feature type="disulfide bond">
    <location>
        <begin position="241"/>
        <end position="246"/>
    </location>
</feature>
<feature type="disulfide bond">
    <location>
        <begin position="281"/>
        <end position="331"/>
    </location>
</feature>
<feature type="splice variant" id="VSP_054832" description="In isoform 2." evidence="13">
    <location>
        <begin position="102"/>
        <end position="118"/>
    </location>
</feature>
<feature type="sequence variant" id="VAR_001385" description="In GSL; dbSNP:rs137854541." evidence="11">
    <original>Q</original>
    <variation>R</variation>
    <location>
        <position position="49"/>
    </location>
</feature>
<feature type="sequence variant" id="VAR_063018" description="In GSL; dbSNP:rs538562022." evidence="12">
    <original>S</original>
    <variation>Y</variation>
    <location>
        <position position="51"/>
    </location>
</feature>
<feature type="sequence variant" id="VAR_001386" description="In GSL; dbSNP:rs28934603." evidence="11">
    <original>W</original>
    <variation>R</variation>
    <location>
        <position position="65"/>
    </location>
</feature>
<feature type="sequence variant" id="VAR_001387" description="In GSL; dbSNP:rs137854542." evidence="11">
    <original>S</original>
    <variation>L</variation>
    <location>
        <position position="90"/>
    </location>
</feature>
<feature type="sequence variant" id="VAR_063019" description="In GSL; dbSNP:rs137854545." evidence="12">
    <original>V</original>
    <variation>M</variation>
    <location>
        <position position="132"/>
    </location>
</feature>
<feature type="sequence variant" id="VAR_063020" description="In GSL; dbSNP:rs137854546." evidence="12">
    <original>L</original>
    <variation>P</variation>
    <location>
        <position position="236"/>
    </location>
</feature>
<feature type="sequence variant" id="VAR_001388" description="In GSL; small amount of activity; dbSNP:rs137854544." evidence="11 12">
    <original>Y</original>
    <variation>N</variation>
    <location>
        <position position="249"/>
    </location>
</feature>
<feature type="sequence variant" id="VAR_001389" description="In GSL; loss of activity; dbSNP:rs137854543." evidence="11">
    <original>Y</original>
    <variation>C</variation>
    <location>
        <position position="395"/>
    </location>
</feature>
<feature type="sequence variant" id="VAR_063021" description="In GSL; dbSNP:rs137854548." evidence="12">
    <original>M</original>
    <variation>T</variation>
    <location>
        <position position="406"/>
    </location>
</feature>
<feature type="sequence variant" id="VAR_063022" description="In GSL; dbSNP:rs137854547." evidence="12">
    <original>G</original>
    <variation>S</variation>
    <location>
        <position position="439"/>
    </location>
</feature>
<feature type="sequence variant" id="VAR_001390" description="In GSL; dbSNP:rs137854540." evidence="8 12">
    <original>F</original>
    <variation>V</variation>
    <location>
        <position position="440"/>
    </location>
</feature>
<feature type="sequence variant" id="VAR_063023" description="In GSL; dbSNP:rs137854549." evidence="4">
    <original>K</original>
    <variation>E</variation>
    <location>
        <position position="453"/>
    </location>
</feature>
<feature type="mutagenesis site" description="Inactivates the enzyme." evidence="9">
    <original>S</original>
    <variation>A</variation>
    <location>
        <position position="178"/>
    </location>
</feature>
<feature type="mutagenesis site" description="Inactivates the enzyme." evidence="9">
    <original>H</original>
    <variation>Q</variation>
    <location>
        <position position="457"/>
    </location>
</feature>
<feature type="sequence conflict" description="In Ref. 4; AAH00597." evidence="13" ref="4">
    <location>
        <position position="19"/>
    </location>
</feature>
<feature type="sequence conflict" description="In Ref. 1; AAA36476." evidence="13" ref="1">
    <original>G</original>
    <variation>S</variation>
    <location>
        <position position="56"/>
    </location>
</feature>
<feature type="helix" evidence="16">
    <location>
        <begin position="31"/>
        <end position="33"/>
    </location>
</feature>
<feature type="strand" evidence="17">
    <location>
        <begin position="41"/>
        <end position="43"/>
    </location>
</feature>
<feature type="strand" evidence="16">
    <location>
        <begin position="49"/>
        <end position="55"/>
    </location>
</feature>
<feature type="strand" evidence="16">
    <location>
        <begin position="60"/>
        <end position="67"/>
    </location>
</feature>
<feature type="turn" evidence="16">
    <location>
        <begin position="73"/>
        <end position="75"/>
    </location>
</feature>
<feature type="strand" evidence="16">
    <location>
        <begin position="78"/>
        <end position="82"/>
    </location>
</feature>
<feature type="turn" evidence="16">
    <location>
        <begin position="85"/>
        <end position="87"/>
    </location>
</feature>
<feature type="helix" evidence="16">
    <location>
        <begin position="91"/>
        <end position="96"/>
    </location>
</feature>
<feature type="strand" evidence="16">
    <location>
        <begin position="99"/>
        <end position="103"/>
    </location>
</feature>
<feature type="strand" evidence="16">
    <location>
        <begin position="110"/>
        <end position="112"/>
    </location>
</feature>
<feature type="helix" evidence="16">
    <location>
        <begin position="117"/>
        <end position="119"/>
    </location>
</feature>
<feature type="strand" evidence="16">
    <location>
        <begin position="120"/>
        <end position="126"/>
    </location>
</feature>
<feature type="strand" evidence="15">
    <location>
        <begin position="136"/>
        <end position="139"/>
    </location>
</feature>
<feature type="helix" evidence="16">
    <location>
        <begin position="146"/>
        <end position="163"/>
    </location>
</feature>
<feature type="helix" evidence="16">
    <location>
        <begin position="165"/>
        <end position="167"/>
    </location>
</feature>
<feature type="strand" evidence="18">
    <location>
        <begin position="168"/>
        <end position="170"/>
    </location>
</feature>
<feature type="strand" evidence="16">
    <location>
        <begin position="172"/>
        <end position="177"/>
    </location>
</feature>
<feature type="helix" evidence="16">
    <location>
        <begin position="180"/>
        <end position="192"/>
    </location>
</feature>
<feature type="strand" evidence="16">
    <location>
        <begin position="199"/>
        <end position="206"/>
    </location>
</feature>
<feature type="helix" evidence="16">
    <location>
        <begin position="211"/>
        <end position="224"/>
    </location>
</feature>
<feature type="helix" evidence="16">
    <location>
        <begin position="230"/>
        <end position="240"/>
    </location>
</feature>
<feature type="helix" evidence="16">
    <location>
        <begin position="254"/>
        <end position="268"/>
    </location>
</feature>
<feature type="strand" evidence="16">
    <location>
        <begin position="269"/>
        <end position="271"/>
    </location>
</feature>
<feature type="strand" evidence="15">
    <location>
        <begin position="286"/>
        <end position="292"/>
    </location>
</feature>
<feature type="strand" evidence="15">
    <location>
        <begin position="295"/>
        <end position="298"/>
    </location>
</feature>
<feature type="helix" evidence="15">
    <location>
        <begin position="315"/>
        <end position="317"/>
    </location>
</feature>
<feature type="helix" evidence="15">
    <location>
        <begin position="318"/>
        <end position="321"/>
    </location>
</feature>
<feature type="strand" evidence="15">
    <location>
        <begin position="324"/>
        <end position="327"/>
    </location>
</feature>
<feature type="helix" evidence="16">
    <location>
        <begin position="335"/>
        <end position="341"/>
    </location>
</feature>
<feature type="helix" evidence="16">
    <location>
        <begin position="344"/>
        <end position="349"/>
    </location>
</feature>
<feature type="helix" evidence="16">
    <location>
        <begin position="364"/>
        <end position="369"/>
    </location>
</feature>
<feature type="strand" evidence="16">
    <location>
        <begin position="375"/>
        <end position="377"/>
    </location>
</feature>
<feature type="helix" evidence="16">
    <location>
        <begin position="378"/>
        <end position="386"/>
    </location>
</feature>
<feature type="strand" evidence="16">
    <location>
        <begin position="391"/>
        <end position="397"/>
    </location>
</feature>
<feature type="strand" evidence="16">
    <location>
        <begin position="401"/>
        <end position="403"/>
    </location>
</feature>
<feature type="helix" evidence="16">
    <location>
        <begin position="405"/>
        <end position="414"/>
    </location>
</feature>
<feature type="strand" evidence="16">
    <location>
        <begin position="424"/>
        <end position="429"/>
    </location>
</feature>
<feature type="helix" evidence="16">
    <location>
        <begin position="431"/>
        <end position="433"/>
    </location>
</feature>
<feature type="strand" evidence="16">
    <location>
        <begin position="435"/>
        <end position="444"/>
    </location>
</feature>
<feature type="strand" evidence="16">
    <location>
        <begin position="447"/>
        <end position="452"/>
    </location>
</feature>
<feature type="helix" evidence="16">
    <location>
        <begin position="459"/>
        <end position="462"/>
    </location>
</feature>
<feature type="helix" evidence="16">
    <location>
        <begin position="464"/>
        <end position="475"/>
    </location>
</feature>